<accession>Q6KHV1</accession>
<gene>
    <name evidence="1" type="primary">engB</name>
    <name type="ordered locus">MMOB3400</name>
</gene>
<protein>
    <recommendedName>
        <fullName evidence="1">Probable GTP-binding protein EngB</fullName>
    </recommendedName>
</protein>
<comment type="function">
    <text evidence="1">Necessary for normal cell division and for the maintenance of normal septation.</text>
</comment>
<comment type="cofactor">
    <cofactor evidence="1">
        <name>Mg(2+)</name>
        <dbReference type="ChEBI" id="CHEBI:18420"/>
    </cofactor>
</comment>
<comment type="similarity">
    <text evidence="1">Belongs to the TRAFAC class TrmE-Era-EngA-EngB-Septin-like GTPase superfamily. EngB GTPase family.</text>
</comment>
<name>ENGB_MYCM1</name>
<sequence>MLKFIKSSTKESEWLKNPKNEICFVGRSNVGKSSLINALFKTRVVKVGKTPGKTKLINFFEDERGNSVVDLPGYGYAKLSKEAQSEISDMIFEFLTKRVEIKKLFLLIDSRLGFTPIDQEFYDFLKEAPFEIIIVATKRDKLNQSQTYQIKKSLDELKVKYFLVSITKKEFLQDLVNNLFN</sequence>
<keyword id="KW-0131">Cell cycle</keyword>
<keyword id="KW-0132">Cell division</keyword>
<keyword id="KW-0342">GTP-binding</keyword>
<keyword id="KW-0460">Magnesium</keyword>
<keyword id="KW-0479">Metal-binding</keyword>
<keyword id="KW-0547">Nucleotide-binding</keyword>
<keyword id="KW-1185">Reference proteome</keyword>
<keyword id="KW-0717">Septation</keyword>
<dbReference type="EMBL" id="AE017308">
    <property type="protein sequence ID" value="AAT27826.1"/>
    <property type="molecule type" value="Genomic_DNA"/>
</dbReference>
<dbReference type="RefSeq" id="WP_011264860.1">
    <property type="nucleotide sequence ID" value="NC_006908.1"/>
</dbReference>
<dbReference type="SMR" id="Q6KHV1"/>
<dbReference type="STRING" id="267748.MMOB3400"/>
<dbReference type="KEGG" id="mmo:MMOB3400"/>
<dbReference type="eggNOG" id="COG0218">
    <property type="taxonomic scope" value="Bacteria"/>
</dbReference>
<dbReference type="HOGENOM" id="CLU_033732_3_2_14"/>
<dbReference type="OrthoDB" id="9804921at2"/>
<dbReference type="Proteomes" id="UP000009072">
    <property type="component" value="Chromosome"/>
</dbReference>
<dbReference type="GO" id="GO:0005525">
    <property type="term" value="F:GTP binding"/>
    <property type="evidence" value="ECO:0007669"/>
    <property type="project" value="UniProtKB-UniRule"/>
</dbReference>
<dbReference type="GO" id="GO:0046872">
    <property type="term" value="F:metal ion binding"/>
    <property type="evidence" value="ECO:0007669"/>
    <property type="project" value="UniProtKB-KW"/>
</dbReference>
<dbReference type="GO" id="GO:0000917">
    <property type="term" value="P:division septum assembly"/>
    <property type="evidence" value="ECO:0007669"/>
    <property type="project" value="UniProtKB-KW"/>
</dbReference>
<dbReference type="CDD" id="cd01876">
    <property type="entry name" value="YihA_EngB"/>
    <property type="match status" value="1"/>
</dbReference>
<dbReference type="Gene3D" id="3.40.50.300">
    <property type="entry name" value="P-loop containing nucleotide triphosphate hydrolases"/>
    <property type="match status" value="1"/>
</dbReference>
<dbReference type="HAMAP" id="MF_00321">
    <property type="entry name" value="GTPase_EngB"/>
    <property type="match status" value="1"/>
</dbReference>
<dbReference type="InterPro" id="IPR030393">
    <property type="entry name" value="G_ENGB_dom"/>
</dbReference>
<dbReference type="InterPro" id="IPR006073">
    <property type="entry name" value="GTP-bd"/>
</dbReference>
<dbReference type="InterPro" id="IPR019987">
    <property type="entry name" value="GTP-bd_ribosome_bio_YsxC"/>
</dbReference>
<dbReference type="InterPro" id="IPR027417">
    <property type="entry name" value="P-loop_NTPase"/>
</dbReference>
<dbReference type="NCBIfam" id="TIGR03598">
    <property type="entry name" value="GTPase_YsxC"/>
    <property type="match status" value="1"/>
</dbReference>
<dbReference type="PANTHER" id="PTHR11649:SF13">
    <property type="entry name" value="ENGB-TYPE G DOMAIN-CONTAINING PROTEIN"/>
    <property type="match status" value="1"/>
</dbReference>
<dbReference type="PANTHER" id="PTHR11649">
    <property type="entry name" value="MSS1/TRME-RELATED GTP-BINDING PROTEIN"/>
    <property type="match status" value="1"/>
</dbReference>
<dbReference type="Pfam" id="PF01926">
    <property type="entry name" value="MMR_HSR1"/>
    <property type="match status" value="1"/>
</dbReference>
<dbReference type="SUPFAM" id="SSF52540">
    <property type="entry name" value="P-loop containing nucleoside triphosphate hydrolases"/>
    <property type="match status" value="1"/>
</dbReference>
<dbReference type="PROSITE" id="PS51706">
    <property type="entry name" value="G_ENGB"/>
    <property type="match status" value="1"/>
</dbReference>
<reference key="1">
    <citation type="journal article" date="2004" name="Genome Res.">
        <title>The complete genome and proteome of Mycoplasma mobile.</title>
        <authorList>
            <person name="Jaffe J.D."/>
            <person name="Stange-Thomann N."/>
            <person name="Smith C."/>
            <person name="DeCaprio D."/>
            <person name="Fisher S."/>
            <person name="Butler J."/>
            <person name="Calvo S."/>
            <person name="Elkins T."/>
            <person name="FitzGerald M.G."/>
            <person name="Hafez N."/>
            <person name="Kodira C.D."/>
            <person name="Major J."/>
            <person name="Wang S."/>
            <person name="Wilkinson J."/>
            <person name="Nicol R."/>
            <person name="Nusbaum C."/>
            <person name="Birren B."/>
            <person name="Berg H.C."/>
            <person name="Church G.M."/>
        </authorList>
    </citation>
    <scope>NUCLEOTIDE SEQUENCE [LARGE SCALE GENOMIC DNA]</scope>
    <source>
        <strain>ATCC 43663 / NCTC 11711 / 163 K</strain>
    </source>
</reference>
<organism>
    <name type="scientific">Mycoplasma mobile (strain ATCC 43663 / 163K / NCTC 11711)</name>
    <name type="common">Mesomycoplasma mobile</name>
    <dbReference type="NCBI Taxonomy" id="267748"/>
    <lineage>
        <taxon>Bacteria</taxon>
        <taxon>Bacillati</taxon>
        <taxon>Mycoplasmatota</taxon>
        <taxon>Mycoplasmoidales</taxon>
        <taxon>Metamycoplasmataceae</taxon>
        <taxon>Mesomycoplasma</taxon>
    </lineage>
</organism>
<proteinExistence type="inferred from homology"/>
<evidence type="ECO:0000255" key="1">
    <source>
        <dbReference type="HAMAP-Rule" id="MF_00321"/>
    </source>
</evidence>
<feature type="chain" id="PRO_0000266898" description="Probable GTP-binding protein EngB">
    <location>
        <begin position="1"/>
        <end position="181"/>
    </location>
</feature>
<feature type="domain" description="EngB-type G" evidence="1">
    <location>
        <begin position="18"/>
        <end position="181"/>
    </location>
</feature>
<feature type="binding site" evidence="1">
    <location>
        <begin position="26"/>
        <end position="33"/>
    </location>
    <ligand>
        <name>GTP</name>
        <dbReference type="ChEBI" id="CHEBI:37565"/>
    </ligand>
</feature>
<feature type="binding site" evidence="1">
    <location>
        <position position="33"/>
    </location>
    <ligand>
        <name>Mg(2+)</name>
        <dbReference type="ChEBI" id="CHEBI:18420"/>
    </ligand>
</feature>
<feature type="binding site" evidence="1">
    <location>
        <begin position="52"/>
        <end position="56"/>
    </location>
    <ligand>
        <name>GTP</name>
        <dbReference type="ChEBI" id="CHEBI:37565"/>
    </ligand>
</feature>
<feature type="binding site" evidence="1">
    <location>
        <position position="54"/>
    </location>
    <ligand>
        <name>Mg(2+)</name>
        <dbReference type="ChEBI" id="CHEBI:18420"/>
    </ligand>
</feature>
<feature type="binding site" evidence="1">
    <location>
        <begin position="70"/>
        <end position="73"/>
    </location>
    <ligand>
        <name>GTP</name>
        <dbReference type="ChEBI" id="CHEBI:37565"/>
    </ligand>
</feature>
<feature type="binding site" evidence="1">
    <location>
        <begin position="137"/>
        <end position="140"/>
    </location>
    <ligand>
        <name>GTP</name>
        <dbReference type="ChEBI" id="CHEBI:37565"/>
    </ligand>
</feature>
<feature type="binding site" evidence="1">
    <location>
        <begin position="164"/>
        <end position="166"/>
    </location>
    <ligand>
        <name>GTP</name>
        <dbReference type="ChEBI" id="CHEBI:37565"/>
    </ligand>
</feature>